<comment type="catalytic activity">
    <reaction>
        <text>tRNA(Ile) + L-isoleucine + ATP = L-isoleucyl-tRNA(Ile) + AMP + diphosphate</text>
        <dbReference type="Rhea" id="RHEA:11060"/>
        <dbReference type="Rhea" id="RHEA-COMP:9666"/>
        <dbReference type="Rhea" id="RHEA-COMP:9695"/>
        <dbReference type="ChEBI" id="CHEBI:30616"/>
        <dbReference type="ChEBI" id="CHEBI:33019"/>
        <dbReference type="ChEBI" id="CHEBI:58045"/>
        <dbReference type="ChEBI" id="CHEBI:78442"/>
        <dbReference type="ChEBI" id="CHEBI:78528"/>
        <dbReference type="ChEBI" id="CHEBI:456215"/>
        <dbReference type="EC" id="6.1.1.5"/>
    </reaction>
</comment>
<comment type="subcellular location">
    <subcellularLocation>
        <location evidence="1">Cytoplasm</location>
    </subcellularLocation>
</comment>
<comment type="similarity">
    <text evidence="2">Belongs to the class-I aminoacyl-tRNA synthetase family.</text>
</comment>
<evidence type="ECO:0000250" key="1"/>
<evidence type="ECO:0000305" key="2"/>
<keyword id="KW-0030">Aminoacyl-tRNA synthetase</keyword>
<keyword id="KW-0067">ATP-binding</keyword>
<keyword id="KW-0963">Cytoplasm</keyword>
<keyword id="KW-0436">Ligase</keyword>
<keyword id="KW-0547">Nucleotide-binding</keyword>
<keyword id="KW-0648">Protein biosynthesis</keyword>
<keyword id="KW-1185">Reference proteome</keyword>
<name>SYIC_DICDI</name>
<protein>
    <recommendedName>
        <fullName>Probable isoleucine--tRNA ligase, cytoplasmic</fullName>
        <ecNumber>6.1.1.5</ecNumber>
    </recommendedName>
    <alternativeName>
        <fullName>Isoleucyl-tRNA synthetase</fullName>
        <shortName>IRS</shortName>
        <shortName>IleRS</shortName>
    </alternativeName>
</protein>
<dbReference type="EC" id="6.1.1.5"/>
<dbReference type="EMBL" id="AAFI02000023">
    <property type="protein sequence ID" value="EAL68319.1"/>
    <property type="molecule type" value="Genomic_DNA"/>
</dbReference>
<dbReference type="RefSeq" id="XP_642268.1">
    <property type="nucleotide sequence ID" value="XM_637176.1"/>
</dbReference>
<dbReference type="SMR" id="Q54YD4"/>
<dbReference type="FunCoup" id="Q54YD4">
    <property type="interactions" value="954"/>
</dbReference>
<dbReference type="STRING" id="44689.Q54YD4"/>
<dbReference type="PaxDb" id="44689-DDB0231258"/>
<dbReference type="EnsemblProtists" id="EAL68319">
    <property type="protein sequence ID" value="EAL68319"/>
    <property type="gene ID" value="DDB_G0278293"/>
</dbReference>
<dbReference type="GeneID" id="8621477"/>
<dbReference type="KEGG" id="ddi:DDB_G0278293"/>
<dbReference type="dictyBase" id="DDB_G0278293">
    <property type="gene designation" value="ileS"/>
</dbReference>
<dbReference type="VEuPathDB" id="AmoebaDB:DDB_G0278293"/>
<dbReference type="eggNOG" id="KOG0434">
    <property type="taxonomic scope" value="Eukaryota"/>
</dbReference>
<dbReference type="HOGENOM" id="CLU_001493_1_1_1"/>
<dbReference type="InParanoid" id="Q54YD4"/>
<dbReference type="OMA" id="EIIVIHK"/>
<dbReference type="PhylomeDB" id="Q54YD4"/>
<dbReference type="Reactome" id="R-DDI-9856649">
    <property type="pathway name" value="Transcriptional and post-translational regulation of MITF-M expression and activity"/>
</dbReference>
<dbReference type="PRO" id="PR:Q54YD4"/>
<dbReference type="Proteomes" id="UP000002195">
    <property type="component" value="Chromosome 3"/>
</dbReference>
<dbReference type="GO" id="GO:0005829">
    <property type="term" value="C:cytosol"/>
    <property type="evidence" value="ECO:0000250"/>
    <property type="project" value="dictyBase"/>
</dbReference>
<dbReference type="GO" id="GO:0002161">
    <property type="term" value="F:aminoacyl-tRNA deacylase activity"/>
    <property type="evidence" value="ECO:0007669"/>
    <property type="project" value="InterPro"/>
</dbReference>
<dbReference type="GO" id="GO:0005524">
    <property type="term" value="F:ATP binding"/>
    <property type="evidence" value="ECO:0007669"/>
    <property type="project" value="UniProtKB-KW"/>
</dbReference>
<dbReference type="GO" id="GO:0004822">
    <property type="term" value="F:isoleucine-tRNA ligase activity"/>
    <property type="evidence" value="ECO:0000250"/>
    <property type="project" value="dictyBase"/>
</dbReference>
<dbReference type="GO" id="GO:0000049">
    <property type="term" value="F:tRNA binding"/>
    <property type="evidence" value="ECO:0007669"/>
    <property type="project" value="InterPro"/>
</dbReference>
<dbReference type="GO" id="GO:0006428">
    <property type="term" value="P:isoleucyl-tRNA aminoacylation"/>
    <property type="evidence" value="ECO:0000318"/>
    <property type="project" value="GO_Central"/>
</dbReference>
<dbReference type="CDD" id="cd07961">
    <property type="entry name" value="Anticodon_Ia_Ile_ABEc"/>
    <property type="match status" value="1"/>
</dbReference>
<dbReference type="CDD" id="cd00818">
    <property type="entry name" value="IleRS_core"/>
    <property type="match status" value="1"/>
</dbReference>
<dbReference type="FunFam" id="1.10.730.10:FF:000004">
    <property type="entry name" value="Isoleucyl-tRNA synthetase, cytoplasmic"/>
    <property type="match status" value="1"/>
</dbReference>
<dbReference type="FunFam" id="3.40.50.620:FF:000023">
    <property type="entry name" value="Isoleucyl-tRNA synthetase,cytoplasmic"/>
    <property type="match status" value="1"/>
</dbReference>
<dbReference type="FunFam" id="3.40.50.620:FF:000050">
    <property type="entry name" value="Isoleucyl-tRNA synthetase,cytoplasmic"/>
    <property type="match status" value="1"/>
</dbReference>
<dbReference type="Gene3D" id="3.40.50.620">
    <property type="entry name" value="HUPs"/>
    <property type="match status" value="2"/>
</dbReference>
<dbReference type="Gene3D" id="1.10.730.10">
    <property type="entry name" value="Isoleucyl-tRNA Synthetase, Domain 1"/>
    <property type="match status" value="1"/>
</dbReference>
<dbReference type="HAMAP" id="MF_02003">
    <property type="entry name" value="Ile_tRNA_synth_type2"/>
    <property type="match status" value="1"/>
</dbReference>
<dbReference type="InterPro" id="IPR001412">
    <property type="entry name" value="aa-tRNA-synth_I_CS"/>
</dbReference>
<dbReference type="InterPro" id="IPR002300">
    <property type="entry name" value="aa-tRNA-synth_Ia"/>
</dbReference>
<dbReference type="InterPro" id="IPR033709">
    <property type="entry name" value="Anticodon_Ile_ABEc"/>
</dbReference>
<dbReference type="InterPro" id="IPR002301">
    <property type="entry name" value="Ile-tRNA-ligase"/>
</dbReference>
<dbReference type="InterPro" id="IPR023586">
    <property type="entry name" value="Ile-tRNA-ligase_type2"/>
</dbReference>
<dbReference type="InterPro" id="IPR013155">
    <property type="entry name" value="M/V/L/I-tRNA-synth_anticd-bd"/>
</dbReference>
<dbReference type="InterPro" id="IPR014729">
    <property type="entry name" value="Rossmann-like_a/b/a_fold"/>
</dbReference>
<dbReference type="InterPro" id="IPR009080">
    <property type="entry name" value="tRNAsynth_Ia_anticodon-bd"/>
</dbReference>
<dbReference type="InterPro" id="IPR009008">
    <property type="entry name" value="Val/Leu/Ile-tRNA-synth_edit"/>
</dbReference>
<dbReference type="NCBIfam" id="TIGR00392">
    <property type="entry name" value="ileS"/>
    <property type="match status" value="1"/>
</dbReference>
<dbReference type="PANTHER" id="PTHR42780:SF1">
    <property type="entry name" value="ISOLEUCINE--TRNA LIGASE, CYTOPLASMIC"/>
    <property type="match status" value="1"/>
</dbReference>
<dbReference type="PANTHER" id="PTHR42780">
    <property type="entry name" value="SOLEUCYL-TRNA SYNTHETASE"/>
    <property type="match status" value="1"/>
</dbReference>
<dbReference type="Pfam" id="PF08264">
    <property type="entry name" value="Anticodon_1"/>
    <property type="match status" value="1"/>
</dbReference>
<dbReference type="Pfam" id="PF19302">
    <property type="entry name" value="DUF5915"/>
    <property type="match status" value="1"/>
</dbReference>
<dbReference type="Pfam" id="PF00133">
    <property type="entry name" value="tRNA-synt_1"/>
    <property type="match status" value="1"/>
</dbReference>
<dbReference type="PRINTS" id="PR00984">
    <property type="entry name" value="TRNASYNTHILE"/>
</dbReference>
<dbReference type="SUPFAM" id="SSF47323">
    <property type="entry name" value="Anticodon-binding domain of a subclass of class I aminoacyl-tRNA synthetases"/>
    <property type="match status" value="1"/>
</dbReference>
<dbReference type="SUPFAM" id="SSF52374">
    <property type="entry name" value="Nucleotidylyl transferase"/>
    <property type="match status" value="1"/>
</dbReference>
<dbReference type="SUPFAM" id="SSF50677">
    <property type="entry name" value="ValRS/IleRS/LeuRS editing domain"/>
    <property type="match status" value="1"/>
</dbReference>
<dbReference type="PROSITE" id="PS00178">
    <property type="entry name" value="AA_TRNA_LIGASE_I"/>
    <property type="match status" value="1"/>
</dbReference>
<proteinExistence type="inferred from homology"/>
<reference key="1">
    <citation type="journal article" date="2005" name="Nature">
        <title>The genome of the social amoeba Dictyostelium discoideum.</title>
        <authorList>
            <person name="Eichinger L."/>
            <person name="Pachebat J.A."/>
            <person name="Gloeckner G."/>
            <person name="Rajandream M.A."/>
            <person name="Sucgang R."/>
            <person name="Berriman M."/>
            <person name="Song J."/>
            <person name="Olsen R."/>
            <person name="Szafranski K."/>
            <person name="Xu Q."/>
            <person name="Tunggal B."/>
            <person name="Kummerfeld S."/>
            <person name="Madera M."/>
            <person name="Konfortov B.A."/>
            <person name="Rivero F."/>
            <person name="Bankier A.T."/>
            <person name="Lehmann R."/>
            <person name="Hamlin N."/>
            <person name="Davies R."/>
            <person name="Gaudet P."/>
            <person name="Fey P."/>
            <person name="Pilcher K."/>
            <person name="Chen G."/>
            <person name="Saunders D."/>
            <person name="Sodergren E.J."/>
            <person name="Davis P."/>
            <person name="Kerhornou A."/>
            <person name="Nie X."/>
            <person name="Hall N."/>
            <person name="Anjard C."/>
            <person name="Hemphill L."/>
            <person name="Bason N."/>
            <person name="Farbrother P."/>
            <person name="Desany B."/>
            <person name="Just E."/>
            <person name="Morio T."/>
            <person name="Rost R."/>
            <person name="Churcher C.M."/>
            <person name="Cooper J."/>
            <person name="Haydock S."/>
            <person name="van Driessche N."/>
            <person name="Cronin A."/>
            <person name="Goodhead I."/>
            <person name="Muzny D.M."/>
            <person name="Mourier T."/>
            <person name="Pain A."/>
            <person name="Lu M."/>
            <person name="Harper D."/>
            <person name="Lindsay R."/>
            <person name="Hauser H."/>
            <person name="James K.D."/>
            <person name="Quiles M."/>
            <person name="Madan Babu M."/>
            <person name="Saito T."/>
            <person name="Buchrieser C."/>
            <person name="Wardroper A."/>
            <person name="Felder M."/>
            <person name="Thangavelu M."/>
            <person name="Johnson D."/>
            <person name="Knights A."/>
            <person name="Loulseged H."/>
            <person name="Mungall K.L."/>
            <person name="Oliver K."/>
            <person name="Price C."/>
            <person name="Quail M.A."/>
            <person name="Urushihara H."/>
            <person name="Hernandez J."/>
            <person name="Rabbinowitsch E."/>
            <person name="Steffen D."/>
            <person name="Sanders M."/>
            <person name="Ma J."/>
            <person name="Kohara Y."/>
            <person name="Sharp S."/>
            <person name="Simmonds M.N."/>
            <person name="Spiegler S."/>
            <person name="Tivey A."/>
            <person name="Sugano S."/>
            <person name="White B."/>
            <person name="Walker D."/>
            <person name="Woodward J.R."/>
            <person name="Winckler T."/>
            <person name="Tanaka Y."/>
            <person name="Shaulsky G."/>
            <person name="Schleicher M."/>
            <person name="Weinstock G.M."/>
            <person name="Rosenthal A."/>
            <person name="Cox E.C."/>
            <person name="Chisholm R.L."/>
            <person name="Gibbs R.A."/>
            <person name="Loomis W.F."/>
            <person name="Platzer M."/>
            <person name="Kay R.R."/>
            <person name="Williams J.G."/>
            <person name="Dear P.H."/>
            <person name="Noegel A.A."/>
            <person name="Barrell B.G."/>
            <person name="Kuspa A."/>
        </authorList>
    </citation>
    <scope>NUCLEOTIDE SEQUENCE [LARGE SCALE GENOMIC DNA]</scope>
    <source>
        <strain>AX4</strain>
    </source>
</reference>
<feature type="chain" id="PRO_0000327969" description="Probable isoleucine--tRNA ligase, cytoplasmic">
    <location>
        <begin position="1"/>
        <end position="1067"/>
    </location>
</feature>
<feature type="short sequence motif" description="'HIGH' region" evidence="1">
    <location>
        <begin position="47"/>
        <end position="57"/>
    </location>
</feature>
<feature type="short sequence motif" description="'KMSKS' region" evidence="1">
    <location>
        <begin position="604"/>
        <end position="608"/>
    </location>
</feature>
<feature type="binding site" evidence="1">
    <location>
        <position position="607"/>
    </location>
    <ligand>
        <name>ATP</name>
        <dbReference type="ChEBI" id="CHEBI:30616"/>
    </ligand>
</feature>
<accession>Q54YD4</accession>
<sequence length="1067" mass="122599">MEEVPQKIDFAGEESKILKYWDDIKAFETSVKMSEGKPEYSFYDGPPFATGLPHYGHILAGTIKDTITRYAHQTGHHVERRFGWDCHGLPIEFEIDKLHGVRTKEDVLKMGIPTYNQHCRSIVMKYSHEWEIVVNRMGRWIDMKNNYKTMDTPFMESVWWVFQELFKKDLVYQGFKVMPYSIGCTTPLSNFEASSNYKDVSDPACVVSFQTLDDEKVSILAWTTTPWTLPSNLALTVNPKMEYIKINDIKRNQIFILGKNRTSILYKSDKEYTVLETMKGTDLIGKKYVPMFPYFASDANMGGFVVIGGDFVTDDSGTGIVHTAPAYGEDDFNVCIANGVISRDQFKRPILNSVDANGCFTSDVTDFAGMMVKDAETTKQISIYLKNKGRMVNSANLVHSYPYCWRSDTPLIYKAVGSWFVRVESIRDKLLANNDKTYWVPDFVKEKRFANWLKNATDWAVSRNRYWGTPIPLWISEDGEEVVVIGSIDELERLSGVRVTDLHRESIDHITIPSQKGKGTLRRIEDVFDCWFESGSMPYAQQHYPFENKDKFEKIFPAHFIAEGLDQTRGWFYTLLVLSTALFDKPPFQNLIVNGLVLAADGKKMSKRLKNYPDPMEVVSKVGADSLRLYLINSPVVRAETLKFQEKGVQDMIKDVFLPWFNAYRFFVQNCLRFEKATNTTFQPDIKVALASENVMDKWILASCQSLIAFVRAEMAAYRLYTVVPKLVRFIEDLTNWFVRLNRKRLKGSNGDADCLAALNILYEVLMTICIAMGPFTPFFTEYMYQNLKKALPKEKQMDSVHYVMFPEPIQEAFNTRIEEAISRMQVVIELGRAARDRRTKPIKFPLKEFMVITENQQYLADLESLKSYILEELNIQNIVLTSDEGSFVVVTAEADNKRLGARLKNDFKKISPLISKLTNEQLREFQKTQTIDILGHELTSEDLKIIRKYNGETTNSEPSGNEEILTVLDLTVDSALYEKGLARELINRVQRLRKKSGLTFDDPVSMFYHTKEAELKTAIENNNDYIKETILFNLQFSETTSPSNSFATEIVSIVKDNDAEIYFLKN</sequence>
<gene>
    <name type="primary">ileS</name>
    <name type="ORF">DDB_G0278293</name>
</gene>
<organism>
    <name type="scientific">Dictyostelium discoideum</name>
    <name type="common">Social amoeba</name>
    <dbReference type="NCBI Taxonomy" id="44689"/>
    <lineage>
        <taxon>Eukaryota</taxon>
        <taxon>Amoebozoa</taxon>
        <taxon>Evosea</taxon>
        <taxon>Eumycetozoa</taxon>
        <taxon>Dictyostelia</taxon>
        <taxon>Dictyosteliales</taxon>
        <taxon>Dictyosteliaceae</taxon>
        <taxon>Dictyostelium</taxon>
    </lineage>
</organism>